<accession>Q8Z7K2</accession>
<name>FLGI_SALTI</name>
<organism>
    <name type="scientific">Salmonella typhi</name>
    <dbReference type="NCBI Taxonomy" id="90370"/>
    <lineage>
        <taxon>Bacteria</taxon>
        <taxon>Pseudomonadati</taxon>
        <taxon>Pseudomonadota</taxon>
        <taxon>Gammaproteobacteria</taxon>
        <taxon>Enterobacterales</taxon>
        <taxon>Enterobacteriaceae</taxon>
        <taxon>Salmonella</taxon>
    </lineage>
</organism>
<sequence length="367" mass="38431">MYVFKALAGIVLALVATLAHAERIRDLTSVQGVRENSLIGYGLVVGLDGTGDQTTQTPFTTQTLNNMLSQLGITVPTGTNMQLKNVAAVMVTASYPPFARQGQTIDVVVSSMGNAKSLRGGTLLMTPLKGVDSQVYALAQGNILVGGAGASAGGSSVQVNQLNGGRITNGAIIERELPTQFGAGNTINLQLNDEDFTMAQQITDAINRARGYGSATALDARTVQVRVPSGNSSQVRFLADIQNMEVNVTPQDAKVVINSRTGSVVMNREVTLDSCAVAQGNLSVTVNRQLNVNQPNTPFGGGQTVVTPQTQIDLRQSGGSLQSVRSSANLNSVVRALNALGATPMDLMSILQSMQSAGCLRAKLEII</sequence>
<keyword id="KW-0975">Bacterial flagellum</keyword>
<keyword id="KW-0574">Periplasm</keyword>
<keyword id="KW-0732">Signal</keyword>
<gene>
    <name evidence="1" type="primary">flgI</name>
    <name type="ordered locus">STY1220</name>
    <name type="ordered locus">t1739</name>
</gene>
<dbReference type="EMBL" id="AL513382">
    <property type="protein sequence ID" value="CAD08305.1"/>
    <property type="molecule type" value="Genomic_DNA"/>
</dbReference>
<dbReference type="EMBL" id="AE014613">
    <property type="protein sequence ID" value="AAO69363.1"/>
    <property type="molecule type" value="Genomic_DNA"/>
</dbReference>
<dbReference type="RefSeq" id="NP_455674.1">
    <property type="nucleotide sequence ID" value="NC_003198.1"/>
</dbReference>
<dbReference type="SMR" id="Q8Z7K2"/>
<dbReference type="STRING" id="220341.gene:17585185"/>
<dbReference type="KEGG" id="stt:t1739"/>
<dbReference type="KEGG" id="sty:STY1220"/>
<dbReference type="PATRIC" id="fig|220341.7.peg.1221"/>
<dbReference type="eggNOG" id="COG1706">
    <property type="taxonomic scope" value="Bacteria"/>
</dbReference>
<dbReference type="HOGENOM" id="CLU_045235_1_0_6"/>
<dbReference type="OMA" id="LDTAHNT"/>
<dbReference type="Proteomes" id="UP000000541">
    <property type="component" value="Chromosome"/>
</dbReference>
<dbReference type="Proteomes" id="UP000002670">
    <property type="component" value="Chromosome"/>
</dbReference>
<dbReference type="GO" id="GO:0009428">
    <property type="term" value="C:bacterial-type flagellum basal body, distal rod, P ring"/>
    <property type="evidence" value="ECO:0007669"/>
    <property type="project" value="InterPro"/>
</dbReference>
<dbReference type="GO" id="GO:0030288">
    <property type="term" value="C:outer membrane-bounded periplasmic space"/>
    <property type="evidence" value="ECO:0007669"/>
    <property type="project" value="InterPro"/>
</dbReference>
<dbReference type="GO" id="GO:0005198">
    <property type="term" value="F:structural molecule activity"/>
    <property type="evidence" value="ECO:0007669"/>
    <property type="project" value="InterPro"/>
</dbReference>
<dbReference type="GO" id="GO:0071973">
    <property type="term" value="P:bacterial-type flagellum-dependent cell motility"/>
    <property type="evidence" value="ECO:0007669"/>
    <property type="project" value="InterPro"/>
</dbReference>
<dbReference type="HAMAP" id="MF_00416">
    <property type="entry name" value="FlgI"/>
    <property type="match status" value="1"/>
</dbReference>
<dbReference type="InterPro" id="IPR001782">
    <property type="entry name" value="Flag_FlgI"/>
</dbReference>
<dbReference type="NCBIfam" id="NF003676">
    <property type="entry name" value="PRK05303.1"/>
    <property type="match status" value="1"/>
</dbReference>
<dbReference type="PANTHER" id="PTHR30381">
    <property type="entry name" value="FLAGELLAR P-RING PERIPLASMIC PROTEIN FLGI"/>
    <property type="match status" value="1"/>
</dbReference>
<dbReference type="PANTHER" id="PTHR30381:SF0">
    <property type="entry name" value="FLAGELLAR P-RING PROTEIN"/>
    <property type="match status" value="1"/>
</dbReference>
<dbReference type="Pfam" id="PF02119">
    <property type="entry name" value="FlgI"/>
    <property type="match status" value="1"/>
</dbReference>
<dbReference type="PRINTS" id="PR01010">
    <property type="entry name" value="FLGPRINGFLGI"/>
</dbReference>
<feature type="signal peptide" evidence="1">
    <location>
        <begin position="1"/>
        <end position="21"/>
    </location>
</feature>
<feature type="chain" id="PRO_0000009520" description="Flagellar P-ring protein">
    <location>
        <begin position="22"/>
        <end position="367"/>
    </location>
</feature>
<comment type="function">
    <text evidence="1">Assembles around the rod to form the L-ring and probably protects the motor/basal body from shearing forces during rotation.</text>
</comment>
<comment type="subunit">
    <text evidence="1">The basal body constitutes a major portion of the flagellar organelle and consists of four rings (L,P,S, and M) mounted on a central rod.</text>
</comment>
<comment type="subcellular location">
    <subcellularLocation>
        <location evidence="1">Periplasm</location>
    </subcellularLocation>
    <subcellularLocation>
        <location evidence="1">Bacterial flagellum basal body</location>
    </subcellularLocation>
</comment>
<comment type="similarity">
    <text evidence="1">Belongs to the FlgI family.</text>
</comment>
<reference key="1">
    <citation type="journal article" date="2001" name="Nature">
        <title>Complete genome sequence of a multiple drug resistant Salmonella enterica serovar Typhi CT18.</title>
        <authorList>
            <person name="Parkhill J."/>
            <person name="Dougan G."/>
            <person name="James K.D."/>
            <person name="Thomson N.R."/>
            <person name="Pickard D."/>
            <person name="Wain J."/>
            <person name="Churcher C.M."/>
            <person name="Mungall K.L."/>
            <person name="Bentley S.D."/>
            <person name="Holden M.T.G."/>
            <person name="Sebaihia M."/>
            <person name="Baker S."/>
            <person name="Basham D."/>
            <person name="Brooks K."/>
            <person name="Chillingworth T."/>
            <person name="Connerton P."/>
            <person name="Cronin A."/>
            <person name="Davis P."/>
            <person name="Davies R.M."/>
            <person name="Dowd L."/>
            <person name="White N."/>
            <person name="Farrar J."/>
            <person name="Feltwell T."/>
            <person name="Hamlin N."/>
            <person name="Haque A."/>
            <person name="Hien T.T."/>
            <person name="Holroyd S."/>
            <person name="Jagels K."/>
            <person name="Krogh A."/>
            <person name="Larsen T.S."/>
            <person name="Leather S."/>
            <person name="Moule S."/>
            <person name="O'Gaora P."/>
            <person name="Parry C."/>
            <person name="Quail M.A."/>
            <person name="Rutherford K.M."/>
            <person name="Simmonds M."/>
            <person name="Skelton J."/>
            <person name="Stevens K."/>
            <person name="Whitehead S."/>
            <person name="Barrell B.G."/>
        </authorList>
    </citation>
    <scope>NUCLEOTIDE SEQUENCE [LARGE SCALE GENOMIC DNA]</scope>
    <source>
        <strain>CT18</strain>
    </source>
</reference>
<reference key="2">
    <citation type="journal article" date="2003" name="J. Bacteriol.">
        <title>Comparative genomics of Salmonella enterica serovar Typhi strains Ty2 and CT18.</title>
        <authorList>
            <person name="Deng W."/>
            <person name="Liou S.-R."/>
            <person name="Plunkett G. III"/>
            <person name="Mayhew G.F."/>
            <person name="Rose D.J."/>
            <person name="Burland V."/>
            <person name="Kodoyianni V."/>
            <person name="Schwartz D.C."/>
            <person name="Blattner F.R."/>
        </authorList>
    </citation>
    <scope>NUCLEOTIDE SEQUENCE [LARGE SCALE GENOMIC DNA]</scope>
    <source>
        <strain>ATCC 700931 / Ty2</strain>
    </source>
</reference>
<protein>
    <recommendedName>
        <fullName evidence="1">Flagellar P-ring protein</fullName>
    </recommendedName>
    <alternativeName>
        <fullName evidence="1">Basal body P-ring protein</fullName>
    </alternativeName>
</protein>
<evidence type="ECO:0000255" key="1">
    <source>
        <dbReference type="HAMAP-Rule" id="MF_00416"/>
    </source>
</evidence>
<proteinExistence type="inferred from homology"/>